<keyword id="KW-0067">ATP-binding</keyword>
<keyword id="KW-0131">Cell cycle</keyword>
<keyword id="KW-0132">Cell division</keyword>
<keyword id="KW-0133">Cell shape</keyword>
<keyword id="KW-0961">Cell wall biogenesis/degradation</keyword>
<keyword id="KW-0963">Cytoplasm</keyword>
<keyword id="KW-0436">Ligase</keyword>
<keyword id="KW-0547">Nucleotide-binding</keyword>
<keyword id="KW-0573">Peptidoglycan synthesis</keyword>
<keyword id="KW-1185">Reference proteome</keyword>
<comment type="function">
    <text evidence="1">Cell wall formation. Catalyzes the addition of glutamate to the nucleotide precursor UDP-N-acetylmuramoyl-L-alanine (UMA).</text>
</comment>
<comment type="catalytic activity">
    <reaction evidence="1">
        <text>UDP-N-acetyl-alpha-D-muramoyl-L-alanine + D-glutamate + ATP = UDP-N-acetyl-alpha-D-muramoyl-L-alanyl-D-glutamate + ADP + phosphate + H(+)</text>
        <dbReference type="Rhea" id="RHEA:16429"/>
        <dbReference type="ChEBI" id="CHEBI:15378"/>
        <dbReference type="ChEBI" id="CHEBI:29986"/>
        <dbReference type="ChEBI" id="CHEBI:30616"/>
        <dbReference type="ChEBI" id="CHEBI:43474"/>
        <dbReference type="ChEBI" id="CHEBI:83898"/>
        <dbReference type="ChEBI" id="CHEBI:83900"/>
        <dbReference type="ChEBI" id="CHEBI:456216"/>
        <dbReference type="EC" id="6.3.2.9"/>
    </reaction>
</comment>
<comment type="pathway">
    <text evidence="1">Cell wall biogenesis; peptidoglycan biosynthesis.</text>
</comment>
<comment type="subcellular location">
    <subcellularLocation>
        <location evidence="1">Cytoplasm</location>
    </subcellularLocation>
</comment>
<comment type="similarity">
    <text evidence="1">Belongs to the MurCDEF family.</text>
</comment>
<organism>
    <name type="scientific">Chlorobium phaeobacteroides (strain DSM 266 / SMG 266 / 2430)</name>
    <dbReference type="NCBI Taxonomy" id="290317"/>
    <lineage>
        <taxon>Bacteria</taxon>
        <taxon>Pseudomonadati</taxon>
        <taxon>Chlorobiota</taxon>
        <taxon>Chlorobiia</taxon>
        <taxon>Chlorobiales</taxon>
        <taxon>Chlorobiaceae</taxon>
        <taxon>Chlorobium/Pelodictyon group</taxon>
        <taxon>Chlorobium</taxon>
    </lineage>
</organism>
<evidence type="ECO:0000255" key="1">
    <source>
        <dbReference type="HAMAP-Rule" id="MF_00639"/>
    </source>
</evidence>
<name>MURD_CHLPD</name>
<sequence length="464" mass="50600">MDVAGKKVAVLGARRSGMAVAELLSLKGASVFVSELGTIGAHESARLQALRIPFEEGGHSDNVLCTDFCVISPGIPGRAPVVRAMLEKGIPLFSEIEVAYWFCKARIIGITGTDGKTTTATLVHRIFETDGMTHRYRAFSVGNIGQPFSSRVLTMRPEDVAVIELSSYQLEGCCTFRPDVSVITNITPDHLDRYEGELHNYAQTKYRIYAHQGKEDTLVYNDDDPLLHDHFASNRETLPCRIVPFGIGCKPEHAGFAAAVRFCDHRIVFDAGAKSENIIEAEDFLKRSFRGRHNIANALAAVAAARALGIGNEAIRSALQGFSGVEHRQEFVRTLDGSDWINDSKATNINALSQALETVPGRMVLIAGGRDKGSDYREIAGIVRKKVAALVAIGEAREKLCAAYGGMVDVRSANSLEEAVSLARALVEPGQTVLFSPGCSSFDMFEDFEDRGRQFKKLTTDLRS</sequence>
<gene>
    <name evidence="1" type="primary">murD</name>
    <name type="ordered locus">Cpha266_2723</name>
</gene>
<accession>A1BJY0</accession>
<feature type="chain" id="PRO_0000301421" description="UDP-N-acetylmuramoylalanine--D-glutamate ligase">
    <location>
        <begin position="1"/>
        <end position="464"/>
    </location>
</feature>
<feature type="binding site" evidence="1">
    <location>
        <begin position="112"/>
        <end position="118"/>
    </location>
    <ligand>
        <name>ATP</name>
        <dbReference type="ChEBI" id="CHEBI:30616"/>
    </ligand>
</feature>
<reference key="1">
    <citation type="submission" date="2006-12" db="EMBL/GenBank/DDBJ databases">
        <title>Complete sequence of Chlorobium phaeobacteroides DSM 266.</title>
        <authorList>
            <consortium name="US DOE Joint Genome Institute"/>
            <person name="Copeland A."/>
            <person name="Lucas S."/>
            <person name="Lapidus A."/>
            <person name="Barry K."/>
            <person name="Detter J.C."/>
            <person name="Glavina del Rio T."/>
            <person name="Hammon N."/>
            <person name="Israni S."/>
            <person name="Pitluck S."/>
            <person name="Goltsman E."/>
            <person name="Schmutz J."/>
            <person name="Larimer F."/>
            <person name="Land M."/>
            <person name="Hauser L."/>
            <person name="Mikhailova N."/>
            <person name="Li T."/>
            <person name="Overmann J."/>
            <person name="Bryant D.A."/>
            <person name="Richardson P."/>
        </authorList>
    </citation>
    <scope>NUCLEOTIDE SEQUENCE [LARGE SCALE GENOMIC DNA]</scope>
    <source>
        <strain>DSM 266 / SMG 266 / 2430</strain>
    </source>
</reference>
<dbReference type="EC" id="6.3.2.9" evidence="1"/>
<dbReference type="EMBL" id="CP000492">
    <property type="protein sequence ID" value="ABL66707.1"/>
    <property type="molecule type" value="Genomic_DNA"/>
</dbReference>
<dbReference type="RefSeq" id="WP_015961234.1">
    <property type="nucleotide sequence ID" value="NC_008639.1"/>
</dbReference>
<dbReference type="SMR" id="A1BJY0"/>
<dbReference type="STRING" id="290317.Cpha266_2723"/>
<dbReference type="KEGG" id="cph:Cpha266_2723"/>
<dbReference type="eggNOG" id="COG0771">
    <property type="taxonomic scope" value="Bacteria"/>
</dbReference>
<dbReference type="HOGENOM" id="CLU_032540_0_0_10"/>
<dbReference type="OrthoDB" id="9809796at2"/>
<dbReference type="UniPathway" id="UPA00219"/>
<dbReference type="Proteomes" id="UP000008701">
    <property type="component" value="Chromosome"/>
</dbReference>
<dbReference type="GO" id="GO:0005737">
    <property type="term" value="C:cytoplasm"/>
    <property type="evidence" value="ECO:0007669"/>
    <property type="project" value="UniProtKB-SubCell"/>
</dbReference>
<dbReference type="GO" id="GO:0005524">
    <property type="term" value="F:ATP binding"/>
    <property type="evidence" value="ECO:0007669"/>
    <property type="project" value="UniProtKB-UniRule"/>
</dbReference>
<dbReference type="GO" id="GO:0008764">
    <property type="term" value="F:UDP-N-acetylmuramoylalanine-D-glutamate ligase activity"/>
    <property type="evidence" value="ECO:0007669"/>
    <property type="project" value="UniProtKB-UniRule"/>
</dbReference>
<dbReference type="GO" id="GO:0051301">
    <property type="term" value="P:cell division"/>
    <property type="evidence" value="ECO:0007669"/>
    <property type="project" value="UniProtKB-KW"/>
</dbReference>
<dbReference type="GO" id="GO:0071555">
    <property type="term" value="P:cell wall organization"/>
    <property type="evidence" value="ECO:0007669"/>
    <property type="project" value="UniProtKB-KW"/>
</dbReference>
<dbReference type="GO" id="GO:0009252">
    <property type="term" value="P:peptidoglycan biosynthetic process"/>
    <property type="evidence" value="ECO:0007669"/>
    <property type="project" value="UniProtKB-UniRule"/>
</dbReference>
<dbReference type="GO" id="GO:0008360">
    <property type="term" value="P:regulation of cell shape"/>
    <property type="evidence" value="ECO:0007669"/>
    <property type="project" value="UniProtKB-KW"/>
</dbReference>
<dbReference type="Gene3D" id="3.90.190.20">
    <property type="entry name" value="Mur ligase, C-terminal domain"/>
    <property type="match status" value="1"/>
</dbReference>
<dbReference type="Gene3D" id="3.40.1190.10">
    <property type="entry name" value="Mur-like, catalytic domain"/>
    <property type="match status" value="1"/>
</dbReference>
<dbReference type="Gene3D" id="3.40.50.720">
    <property type="entry name" value="NAD(P)-binding Rossmann-like Domain"/>
    <property type="match status" value="1"/>
</dbReference>
<dbReference type="HAMAP" id="MF_00639">
    <property type="entry name" value="MurD"/>
    <property type="match status" value="1"/>
</dbReference>
<dbReference type="InterPro" id="IPR036565">
    <property type="entry name" value="Mur-like_cat_sf"/>
</dbReference>
<dbReference type="InterPro" id="IPR004101">
    <property type="entry name" value="Mur_ligase_C"/>
</dbReference>
<dbReference type="InterPro" id="IPR036615">
    <property type="entry name" value="Mur_ligase_C_dom_sf"/>
</dbReference>
<dbReference type="InterPro" id="IPR013221">
    <property type="entry name" value="Mur_ligase_cen"/>
</dbReference>
<dbReference type="InterPro" id="IPR005762">
    <property type="entry name" value="MurD"/>
</dbReference>
<dbReference type="NCBIfam" id="TIGR01087">
    <property type="entry name" value="murD"/>
    <property type="match status" value="1"/>
</dbReference>
<dbReference type="PANTHER" id="PTHR43692">
    <property type="entry name" value="UDP-N-ACETYLMURAMOYLALANINE--D-GLUTAMATE LIGASE"/>
    <property type="match status" value="1"/>
</dbReference>
<dbReference type="PANTHER" id="PTHR43692:SF1">
    <property type="entry name" value="UDP-N-ACETYLMURAMOYLALANINE--D-GLUTAMATE LIGASE"/>
    <property type="match status" value="1"/>
</dbReference>
<dbReference type="Pfam" id="PF02875">
    <property type="entry name" value="Mur_ligase_C"/>
    <property type="match status" value="1"/>
</dbReference>
<dbReference type="Pfam" id="PF08245">
    <property type="entry name" value="Mur_ligase_M"/>
    <property type="match status" value="1"/>
</dbReference>
<dbReference type="Pfam" id="PF21377">
    <property type="entry name" value="MurD_N"/>
    <property type="match status" value="1"/>
</dbReference>
<dbReference type="SUPFAM" id="SSF51984">
    <property type="entry name" value="MurCD N-terminal domain"/>
    <property type="match status" value="1"/>
</dbReference>
<dbReference type="SUPFAM" id="SSF53623">
    <property type="entry name" value="MurD-like peptide ligases, catalytic domain"/>
    <property type="match status" value="1"/>
</dbReference>
<dbReference type="SUPFAM" id="SSF53244">
    <property type="entry name" value="MurD-like peptide ligases, peptide-binding domain"/>
    <property type="match status" value="1"/>
</dbReference>
<proteinExistence type="inferred from homology"/>
<protein>
    <recommendedName>
        <fullName evidence="1">UDP-N-acetylmuramoylalanine--D-glutamate ligase</fullName>
        <ecNumber evidence="1">6.3.2.9</ecNumber>
    </recommendedName>
    <alternativeName>
        <fullName evidence="1">D-glutamic acid-adding enzyme</fullName>
    </alternativeName>
    <alternativeName>
        <fullName evidence="1">UDP-N-acetylmuramoyl-L-alanyl-D-glutamate synthetase</fullName>
    </alternativeName>
</protein>